<sequence length="226" mass="24580">MVKLGCSFSGKPGKEAGDQDGAAMDSVPLISPLDVSQLQPSFSDQVVINTQTEYQLTSADQPKKFADLEGQRLACSHSEEGRRLPTARMIAFAMALLGCVLIMYKAIWYDQFTCPDGFLLRHKICTPLTLEMYYTEMDPERHRSILAAIGAYPLSRKHGTEMPAVWGNNYRTAKEEHKGTTPAAMAVSTAAAAAAAEGTEPSGKSLDTREKEDPQKAEGVPSQPPK</sequence>
<comment type="function">
    <text evidence="1">Interacts with clathrin light chain A and stimulates clathrin self-assembly and clathrin-mediated endocytosis.</text>
</comment>
<comment type="subunit">
    <text evidence="1">Interacts with CLTA.</text>
</comment>
<comment type="subcellular location">
    <subcellularLocation>
        <location evidence="1">Cytoplasmic vesicle membrane</location>
        <topology evidence="1">Single-pass membrane protein</topology>
    </subcellularLocation>
    <subcellularLocation>
        <location evidence="1">Cell membrane</location>
        <topology evidence="1">Single-pass membrane protein</topology>
    </subcellularLocation>
</comment>
<comment type="tissue specificity">
    <text evidence="4">Most abundant in brain. Also expressed in testis and ovary and, at much lower levels, in kidney and heart.</text>
</comment>
<comment type="disruption phenotype">
    <text evidence="5">Mice display impaired clathrin assembly and clathrin-mediated endocytosis. Transgenic mice with up-regulated forebrain expression of Caly display a range of abnormal behaviors including spontaneous hyperactivity, reduced anxiety and/or impaired harm avoidance.</text>
</comment>
<comment type="similarity">
    <text evidence="6">Belongs to the NSG family.</text>
</comment>
<comment type="caution">
    <text evidence="6">The human ortholog was originally thought to interact with the D1 dopamine receptor (DRD1) and to play a role in potentiating calcium ion-dependent signaling but this work was later retracted.</text>
</comment>
<evidence type="ECO:0000250" key="1"/>
<evidence type="ECO:0000255" key="2"/>
<evidence type="ECO:0000256" key="3">
    <source>
        <dbReference type="SAM" id="MobiDB-lite"/>
    </source>
</evidence>
<evidence type="ECO:0000269" key="4">
    <source>
    </source>
</evidence>
<evidence type="ECO:0000269" key="5">
    <source>
    </source>
</evidence>
<evidence type="ECO:0000305" key="6"/>
<reference key="1">
    <citation type="journal article" date="2003" name="Gene">
        <title>Structure and expression of the murine calcyon gene.</title>
        <authorList>
            <person name="Dai R."/>
            <person name="Bergson C."/>
        </authorList>
    </citation>
    <scope>NUCLEOTIDE SEQUENCE [MRNA]</scope>
    <scope>TISSUE SPECIFICITY</scope>
</reference>
<reference key="2">
    <citation type="journal article" date="2005" name="Science">
        <title>The transcriptional landscape of the mammalian genome.</title>
        <authorList>
            <person name="Carninci P."/>
            <person name="Kasukawa T."/>
            <person name="Katayama S."/>
            <person name="Gough J."/>
            <person name="Frith M.C."/>
            <person name="Maeda N."/>
            <person name="Oyama R."/>
            <person name="Ravasi T."/>
            <person name="Lenhard B."/>
            <person name="Wells C."/>
            <person name="Kodzius R."/>
            <person name="Shimokawa K."/>
            <person name="Bajic V.B."/>
            <person name="Brenner S.E."/>
            <person name="Batalov S."/>
            <person name="Forrest A.R."/>
            <person name="Zavolan M."/>
            <person name="Davis M.J."/>
            <person name="Wilming L.G."/>
            <person name="Aidinis V."/>
            <person name="Allen J.E."/>
            <person name="Ambesi-Impiombato A."/>
            <person name="Apweiler R."/>
            <person name="Aturaliya R.N."/>
            <person name="Bailey T.L."/>
            <person name="Bansal M."/>
            <person name="Baxter L."/>
            <person name="Beisel K.W."/>
            <person name="Bersano T."/>
            <person name="Bono H."/>
            <person name="Chalk A.M."/>
            <person name="Chiu K.P."/>
            <person name="Choudhary V."/>
            <person name="Christoffels A."/>
            <person name="Clutterbuck D.R."/>
            <person name="Crowe M.L."/>
            <person name="Dalla E."/>
            <person name="Dalrymple B.P."/>
            <person name="de Bono B."/>
            <person name="Della Gatta G."/>
            <person name="di Bernardo D."/>
            <person name="Down T."/>
            <person name="Engstrom P."/>
            <person name="Fagiolini M."/>
            <person name="Faulkner G."/>
            <person name="Fletcher C.F."/>
            <person name="Fukushima T."/>
            <person name="Furuno M."/>
            <person name="Futaki S."/>
            <person name="Gariboldi M."/>
            <person name="Georgii-Hemming P."/>
            <person name="Gingeras T.R."/>
            <person name="Gojobori T."/>
            <person name="Green R.E."/>
            <person name="Gustincich S."/>
            <person name="Harbers M."/>
            <person name="Hayashi Y."/>
            <person name="Hensch T.K."/>
            <person name="Hirokawa N."/>
            <person name="Hill D."/>
            <person name="Huminiecki L."/>
            <person name="Iacono M."/>
            <person name="Ikeo K."/>
            <person name="Iwama A."/>
            <person name="Ishikawa T."/>
            <person name="Jakt M."/>
            <person name="Kanapin A."/>
            <person name="Katoh M."/>
            <person name="Kawasawa Y."/>
            <person name="Kelso J."/>
            <person name="Kitamura H."/>
            <person name="Kitano H."/>
            <person name="Kollias G."/>
            <person name="Krishnan S.P."/>
            <person name="Kruger A."/>
            <person name="Kummerfeld S.K."/>
            <person name="Kurochkin I.V."/>
            <person name="Lareau L.F."/>
            <person name="Lazarevic D."/>
            <person name="Lipovich L."/>
            <person name="Liu J."/>
            <person name="Liuni S."/>
            <person name="McWilliam S."/>
            <person name="Madan Babu M."/>
            <person name="Madera M."/>
            <person name="Marchionni L."/>
            <person name="Matsuda H."/>
            <person name="Matsuzawa S."/>
            <person name="Miki H."/>
            <person name="Mignone F."/>
            <person name="Miyake S."/>
            <person name="Morris K."/>
            <person name="Mottagui-Tabar S."/>
            <person name="Mulder N."/>
            <person name="Nakano N."/>
            <person name="Nakauchi H."/>
            <person name="Ng P."/>
            <person name="Nilsson R."/>
            <person name="Nishiguchi S."/>
            <person name="Nishikawa S."/>
            <person name="Nori F."/>
            <person name="Ohara O."/>
            <person name="Okazaki Y."/>
            <person name="Orlando V."/>
            <person name="Pang K.C."/>
            <person name="Pavan W.J."/>
            <person name="Pavesi G."/>
            <person name="Pesole G."/>
            <person name="Petrovsky N."/>
            <person name="Piazza S."/>
            <person name="Reed J."/>
            <person name="Reid J.F."/>
            <person name="Ring B.Z."/>
            <person name="Ringwald M."/>
            <person name="Rost B."/>
            <person name="Ruan Y."/>
            <person name="Salzberg S.L."/>
            <person name="Sandelin A."/>
            <person name="Schneider C."/>
            <person name="Schoenbach C."/>
            <person name="Sekiguchi K."/>
            <person name="Semple C.A."/>
            <person name="Seno S."/>
            <person name="Sessa L."/>
            <person name="Sheng Y."/>
            <person name="Shibata Y."/>
            <person name="Shimada H."/>
            <person name="Shimada K."/>
            <person name="Silva D."/>
            <person name="Sinclair B."/>
            <person name="Sperling S."/>
            <person name="Stupka E."/>
            <person name="Sugiura K."/>
            <person name="Sultana R."/>
            <person name="Takenaka Y."/>
            <person name="Taki K."/>
            <person name="Tammoja K."/>
            <person name="Tan S.L."/>
            <person name="Tang S."/>
            <person name="Taylor M.S."/>
            <person name="Tegner J."/>
            <person name="Teichmann S.A."/>
            <person name="Ueda H.R."/>
            <person name="van Nimwegen E."/>
            <person name="Verardo R."/>
            <person name="Wei C.L."/>
            <person name="Yagi K."/>
            <person name="Yamanishi H."/>
            <person name="Zabarovsky E."/>
            <person name="Zhu S."/>
            <person name="Zimmer A."/>
            <person name="Hide W."/>
            <person name="Bult C."/>
            <person name="Grimmond S.M."/>
            <person name="Teasdale R.D."/>
            <person name="Liu E.T."/>
            <person name="Brusic V."/>
            <person name="Quackenbush J."/>
            <person name="Wahlestedt C."/>
            <person name="Mattick J.S."/>
            <person name="Hume D.A."/>
            <person name="Kai C."/>
            <person name="Sasaki D."/>
            <person name="Tomaru Y."/>
            <person name="Fukuda S."/>
            <person name="Kanamori-Katayama M."/>
            <person name="Suzuki M."/>
            <person name="Aoki J."/>
            <person name="Arakawa T."/>
            <person name="Iida J."/>
            <person name="Imamura K."/>
            <person name="Itoh M."/>
            <person name="Kato T."/>
            <person name="Kawaji H."/>
            <person name="Kawagashira N."/>
            <person name="Kawashima T."/>
            <person name="Kojima M."/>
            <person name="Kondo S."/>
            <person name="Konno H."/>
            <person name="Nakano K."/>
            <person name="Ninomiya N."/>
            <person name="Nishio T."/>
            <person name="Okada M."/>
            <person name="Plessy C."/>
            <person name="Shibata K."/>
            <person name="Shiraki T."/>
            <person name="Suzuki S."/>
            <person name="Tagami M."/>
            <person name="Waki K."/>
            <person name="Watahiki A."/>
            <person name="Okamura-Oho Y."/>
            <person name="Suzuki H."/>
            <person name="Kawai J."/>
            <person name="Hayashizaki Y."/>
        </authorList>
    </citation>
    <scope>NUCLEOTIDE SEQUENCE [LARGE SCALE MRNA]</scope>
    <source>
        <strain>C57BL/6J</strain>
        <tissue>Brain</tissue>
        <tissue>Embryo</tissue>
    </source>
</reference>
<reference key="3">
    <citation type="journal article" date="2004" name="Genome Res.">
        <title>The status, quality, and expansion of the NIH full-length cDNA project: the Mammalian Gene Collection (MGC).</title>
        <authorList>
            <consortium name="The MGC Project Team"/>
        </authorList>
    </citation>
    <scope>NUCLEOTIDE SEQUENCE [LARGE SCALE MRNA]</scope>
    <source>
        <tissue>Brain</tissue>
    </source>
</reference>
<reference key="4">
    <citation type="journal article" date="2006" name="J. Biol. Chem.">
        <title>Calcyon, a novel partner of clathrin light chain, stimulates clathrin-mediated endocytosis.</title>
        <authorList>
            <person name="Xiao J."/>
            <person name="Dai R."/>
            <person name="Negyessy L."/>
            <person name="Bergson C."/>
        </authorList>
    </citation>
    <scope>DISRUPTION PHENOTYPE</scope>
</reference>
<reference key="5">
    <citation type="journal article" date="2008" name="Behav. Brain Res.">
        <title>Up-regulation of calcyon results in locomotor hyperactivity and reduced anxiety in mice.</title>
        <authorList>
            <person name="Trantham-Davidson H."/>
            <person name="Vazdarjanova A."/>
            <person name="Dai R."/>
            <person name="Terry A."/>
            <person name="Bergson C."/>
        </authorList>
    </citation>
    <scope>TRANSGENIC MICE</scope>
</reference>
<name>CALY_MOUSE</name>
<protein>
    <recommendedName>
        <fullName>Neuron-specific vesicular protein calcyon</fullName>
    </recommendedName>
</protein>
<accession>Q9DCA7</accession>
<accession>Q9D1K9</accession>
<organism>
    <name type="scientific">Mus musculus</name>
    <name type="common">Mouse</name>
    <dbReference type="NCBI Taxonomy" id="10090"/>
    <lineage>
        <taxon>Eukaryota</taxon>
        <taxon>Metazoa</taxon>
        <taxon>Chordata</taxon>
        <taxon>Craniata</taxon>
        <taxon>Vertebrata</taxon>
        <taxon>Euteleostomi</taxon>
        <taxon>Mammalia</taxon>
        <taxon>Eutheria</taxon>
        <taxon>Euarchontoglires</taxon>
        <taxon>Glires</taxon>
        <taxon>Rodentia</taxon>
        <taxon>Myomorpha</taxon>
        <taxon>Muroidea</taxon>
        <taxon>Muridae</taxon>
        <taxon>Murinae</taxon>
        <taxon>Mus</taxon>
        <taxon>Mus</taxon>
    </lineage>
</organism>
<feature type="chain" id="PRO_0000164369" description="Neuron-specific vesicular protein calcyon">
    <location>
        <begin position="1"/>
        <end position="226"/>
    </location>
</feature>
<feature type="topological domain" description="Extracellular" evidence="2">
    <location>
        <begin position="1"/>
        <end position="88"/>
    </location>
</feature>
<feature type="transmembrane region" description="Helical" evidence="2">
    <location>
        <begin position="89"/>
        <end position="109"/>
    </location>
</feature>
<feature type="topological domain" description="Cytoplasmic" evidence="2">
    <location>
        <begin position="110"/>
        <end position="226"/>
    </location>
</feature>
<feature type="region of interest" description="Disordered" evidence="3">
    <location>
        <begin position="1"/>
        <end position="21"/>
    </location>
</feature>
<feature type="region of interest" description="Disordered" evidence="3">
    <location>
        <begin position="177"/>
        <end position="226"/>
    </location>
</feature>
<feature type="compositionally biased region" description="Low complexity" evidence="3">
    <location>
        <begin position="183"/>
        <end position="196"/>
    </location>
</feature>
<feature type="compositionally biased region" description="Basic and acidic residues" evidence="3">
    <location>
        <begin position="206"/>
        <end position="216"/>
    </location>
</feature>
<keyword id="KW-1003">Cell membrane</keyword>
<keyword id="KW-0968">Cytoplasmic vesicle</keyword>
<keyword id="KW-0254">Endocytosis</keyword>
<keyword id="KW-0472">Membrane</keyword>
<keyword id="KW-1185">Reference proteome</keyword>
<keyword id="KW-0812">Transmembrane</keyword>
<keyword id="KW-1133">Transmembrane helix</keyword>
<gene>
    <name type="primary">Caly</name>
    <name type="synonym">Drd1ip</name>
</gene>
<dbReference type="EMBL" id="AK002979">
    <property type="protein sequence ID" value="BAB22492.1"/>
    <property type="molecule type" value="mRNA"/>
</dbReference>
<dbReference type="EMBL" id="AK003400">
    <property type="protein sequence ID" value="BAB22765.2"/>
    <property type="molecule type" value="mRNA"/>
</dbReference>
<dbReference type="EMBL" id="BC049663">
    <property type="protein sequence ID" value="AAH49663.1"/>
    <property type="molecule type" value="mRNA"/>
</dbReference>
<dbReference type="CCDS" id="CCDS21962.1"/>
<dbReference type="RefSeq" id="NP_001177314.1">
    <property type="nucleotide sequence ID" value="NM_001190385.1"/>
</dbReference>
<dbReference type="RefSeq" id="NP_001177315.1">
    <property type="nucleotide sequence ID" value="NM_001190386.1"/>
</dbReference>
<dbReference type="RefSeq" id="NP_081045.2">
    <property type="nucleotide sequence ID" value="NM_026769.5"/>
</dbReference>
<dbReference type="RefSeq" id="XP_006536300.1">
    <property type="nucleotide sequence ID" value="XM_006536237.3"/>
</dbReference>
<dbReference type="RefSeq" id="XP_011248155.1">
    <property type="nucleotide sequence ID" value="XM_011249853.4"/>
</dbReference>
<dbReference type="BioGRID" id="212931">
    <property type="interactions" value="1"/>
</dbReference>
<dbReference type="FunCoup" id="Q9DCA7">
    <property type="interactions" value="62"/>
</dbReference>
<dbReference type="STRING" id="10090.ENSMUSP00000026541"/>
<dbReference type="iPTMnet" id="Q9DCA7"/>
<dbReference type="PhosphoSitePlus" id="Q9DCA7"/>
<dbReference type="PaxDb" id="10090-ENSMUSP00000130779"/>
<dbReference type="ProteomicsDB" id="265515"/>
<dbReference type="Antibodypedia" id="32650">
    <property type="antibodies" value="95 antibodies from 27 providers"/>
</dbReference>
<dbReference type="DNASU" id="68566"/>
<dbReference type="Ensembl" id="ENSMUST00000026541.15">
    <property type="protein sequence ID" value="ENSMUSP00000026541.8"/>
    <property type="gene ID" value="ENSMUSG00000025468.16"/>
</dbReference>
<dbReference type="Ensembl" id="ENSMUST00000166758.4">
    <property type="protein sequence ID" value="ENSMUSP00000130779.3"/>
    <property type="gene ID" value="ENSMUSG00000025468.16"/>
</dbReference>
<dbReference type="Ensembl" id="ENSMUST00000211044.2">
    <property type="protein sequence ID" value="ENSMUSP00000148159.2"/>
    <property type="gene ID" value="ENSMUSG00000025468.16"/>
</dbReference>
<dbReference type="Ensembl" id="ENSMUST00000211283.2">
    <property type="protein sequence ID" value="ENSMUSP00000148173.2"/>
    <property type="gene ID" value="ENSMUSG00000025468.16"/>
</dbReference>
<dbReference type="GeneID" id="68566"/>
<dbReference type="KEGG" id="mmu:68566"/>
<dbReference type="UCSC" id="uc009kgr.1">
    <property type="organism name" value="mouse"/>
</dbReference>
<dbReference type="AGR" id="MGI:1915816"/>
<dbReference type="CTD" id="50632"/>
<dbReference type="MGI" id="MGI:1915816">
    <property type="gene designation" value="Caly"/>
</dbReference>
<dbReference type="VEuPathDB" id="HostDB:ENSMUSG00000025468"/>
<dbReference type="eggNOG" id="ENOG502QW2S">
    <property type="taxonomic scope" value="Eukaryota"/>
</dbReference>
<dbReference type="GeneTree" id="ENSGT00390000000483"/>
<dbReference type="HOGENOM" id="CLU_112085_1_0_1"/>
<dbReference type="InParanoid" id="Q9DCA7"/>
<dbReference type="OMA" id="ILKQKHC"/>
<dbReference type="OrthoDB" id="9866545at2759"/>
<dbReference type="PhylomeDB" id="Q9DCA7"/>
<dbReference type="TreeFam" id="TF332232"/>
<dbReference type="BioGRID-ORCS" id="68566">
    <property type="hits" value="2 hits in 78 CRISPR screens"/>
</dbReference>
<dbReference type="PRO" id="PR:Q9DCA7"/>
<dbReference type="Proteomes" id="UP000000589">
    <property type="component" value="Chromosome 7"/>
</dbReference>
<dbReference type="RNAct" id="Q9DCA7">
    <property type="molecule type" value="protein"/>
</dbReference>
<dbReference type="Bgee" id="ENSMUSG00000025468">
    <property type="expression patterns" value="Expressed in dentate gyrus of hippocampal formation granule cell and 136 other cell types or tissues"/>
</dbReference>
<dbReference type="GO" id="GO:0031410">
    <property type="term" value="C:cytoplasmic vesicle"/>
    <property type="evidence" value="ECO:0000250"/>
    <property type="project" value="UniProtKB"/>
</dbReference>
<dbReference type="GO" id="GO:0030659">
    <property type="term" value="C:cytoplasmic vesicle membrane"/>
    <property type="evidence" value="ECO:0007669"/>
    <property type="project" value="UniProtKB-SubCell"/>
</dbReference>
<dbReference type="GO" id="GO:0098978">
    <property type="term" value="C:glutamatergic synapse"/>
    <property type="evidence" value="ECO:0000314"/>
    <property type="project" value="SynGO"/>
</dbReference>
<dbReference type="GO" id="GO:0005886">
    <property type="term" value="C:plasma membrane"/>
    <property type="evidence" value="ECO:0000250"/>
    <property type="project" value="UniProtKB"/>
</dbReference>
<dbReference type="GO" id="GO:0098843">
    <property type="term" value="C:postsynaptic endocytic zone"/>
    <property type="evidence" value="ECO:0007669"/>
    <property type="project" value="Ensembl"/>
</dbReference>
<dbReference type="GO" id="GO:0032051">
    <property type="term" value="F:clathrin light chain binding"/>
    <property type="evidence" value="ECO:0000250"/>
    <property type="project" value="UniProtKB"/>
</dbReference>
<dbReference type="GO" id="GO:0048268">
    <property type="term" value="P:clathrin coat assembly"/>
    <property type="evidence" value="ECO:0000250"/>
    <property type="project" value="UniProtKB"/>
</dbReference>
<dbReference type="GO" id="GO:0045807">
    <property type="term" value="P:positive regulation of endocytosis"/>
    <property type="evidence" value="ECO:0000250"/>
    <property type="project" value="UniProtKB"/>
</dbReference>
<dbReference type="GO" id="GO:0098884">
    <property type="term" value="P:postsynaptic neurotransmitter receptor internalization"/>
    <property type="evidence" value="ECO:0000314"/>
    <property type="project" value="SynGO"/>
</dbReference>
<dbReference type="InterPro" id="IPR009431">
    <property type="entry name" value="NSG"/>
</dbReference>
<dbReference type="PANTHER" id="PTHR28546:SF1">
    <property type="entry name" value="NEURON-SPECIFIC VESICULAR PROTEIN CALCYON"/>
    <property type="match status" value="1"/>
</dbReference>
<dbReference type="PANTHER" id="PTHR28546">
    <property type="entry name" value="NEURONAL VESICLE TRAFFICKING-ASSOCIATED PROTEIN 2-RELATED"/>
    <property type="match status" value="1"/>
</dbReference>
<dbReference type="Pfam" id="PF06387">
    <property type="entry name" value="Calcyon"/>
    <property type="match status" value="1"/>
</dbReference>
<dbReference type="PIRSF" id="PIRSF002383">
    <property type="entry name" value="Calcyon"/>
    <property type="match status" value="1"/>
</dbReference>
<proteinExistence type="evidence at transcript level"/>